<comment type="function">
    <text evidence="1">Condensation of UDP-2,3-diacylglucosamine and 2,3-diacylglucosamine-1-phosphate to form lipid A disaccharide, a precursor of lipid A, a phosphorylated glycolipid that anchors the lipopolysaccharide to the outer membrane of the cell.</text>
</comment>
<comment type="catalytic activity">
    <reaction evidence="1">
        <text>2-N,3-O-bis[(3R)-3-hydroxytetradecanoyl]-alpha-D-glucosaminyl 1-phosphate + UDP-2-N,3-O-bis[(3R)-3-hydroxytetradecanoyl]-alpha-D-glucosamine = lipid A disaccharide (E. coli) + UDP + H(+)</text>
        <dbReference type="Rhea" id="RHEA:22668"/>
        <dbReference type="ChEBI" id="CHEBI:15378"/>
        <dbReference type="ChEBI" id="CHEBI:57957"/>
        <dbReference type="ChEBI" id="CHEBI:58223"/>
        <dbReference type="ChEBI" id="CHEBI:58466"/>
        <dbReference type="ChEBI" id="CHEBI:78847"/>
    </reaction>
</comment>
<comment type="catalytic activity">
    <reaction evidence="1">
        <text>a lipid X + a UDP-2-N,3-O-bis[(3R)-3-hydroxyacyl]-alpha-D-glucosamine = a lipid A disaccharide + UDP + H(+)</text>
        <dbReference type="Rhea" id="RHEA:67828"/>
        <dbReference type="ChEBI" id="CHEBI:15378"/>
        <dbReference type="ChEBI" id="CHEBI:58223"/>
        <dbReference type="ChEBI" id="CHEBI:137748"/>
        <dbReference type="ChEBI" id="CHEBI:176338"/>
        <dbReference type="ChEBI" id="CHEBI:176343"/>
        <dbReference type="EC" id="2.4.1.182"/>
    </reaction>
</comment>
<comment type="pathway">
    <text evidence="1">Glycolipid biosynthesis; lipid IV(A) biosynthesis; lipid IV(A) from (3R)-3-hydroxytetradecanoyl-[acyl-carrier-protein] and UDP-N-acetyl-alpha-D-glucosamine: step 5/6.</text>
</comment>
<comment type="similarity">
    <text evidence="1">Belongs to the LpxB family.</text>
</comment>
<feature type="chain" id="PRO_1000123058" description="Lipid-A-disaccharide synthase">
    <location>
        <begin position="1"/>
        <end position="382"/>
    </location>
</feature>
<name>LPXB_SALDC</name>
<dbReference type="EC" id="2.4.1.182" evidence="1"/>
<dbReference type="EMBL" id="CP001144">
    <property type="protein sequence ID" value="ACH74435.1"/>
    <property type="molecule type" value="Genomic_DNA"/>
</dbReference>
<dbReference type="RefSeq" id="WP_000741216.1">
    <property type="nucleotide sequence ID" value="NC_011205.1"/>
</dbReference>
<dbReference type="SMR" id="B5FJ29"/>
<dbReference type="CAZy" id="GT19">
    <property type="family name" value="Glycosyltransferase Family 19"/>
</dbReference>
<dbReference type="KEGG" id="sed:SeD_A0251"/>
<dbReference type="HOGENOM" id="CLU_036577_3_0_6"/>
<dbReference type="UniPathway" id="UPA00359">
    <property type="reaction ID" value="UER00481"/>
</dbReference>
<dbReference type="Proteomes" id="UP000008322">
    <property type="component" value="Chromosome"/>
</dbReference>
<dbReference type="GO" id="GO:0016020">
    <property type="term" value="C:membrane"/>
    <property type="evidence" value="ECO:0007669"/>
    <property type="project" value="GOC"/>
</dbReference>
<dbReference type="GO" id="GO:0008915">
    <property type="term" value="F:lipid-A-disaccharide synthase activity"/>
    <property type="evidence" value="ECO:0007669"/>
    <property type="project" value="UniProtKB-UniRule"/>
</dbReference>
<dbReference type="GO" id="GO:0005543">
    <property type="term" value="F:phospholipid binding"/>
    <property type="evidence" value="ECO:0007669"/>
    <property type="project" value="TreeGrafter"/>
</dbReference>
<dbReference type="GO" id="GO:0009245">
    <property type="term" value="P:lipid A biosynthetic process"/>
    <property type="evidence" value="ECO:0007669"/>
    <property type="project" value="UniProtKB-UniRule"/>
</dbReference>
<dbReference type="CDD" id="cd01635">
    <property type="entry name" value="Glycosyltransferase_GTB-type"/>
    <property type="match status" value="1"/>
</dbReference>
<dbReference type="HAMAP" id="MF_00392">
    <property type="entry name" value="LpxB"/>
    <property type="match status" value="1"/>
</dbReference>
<dbReference type="InterPro" id="IPR003835">
    <property type="entry name" value="Glyco_trans_19"/>
</dbReference>
<dbReference type="NCBIfam" id="TIGR00215">
    <property type="entry name" value="lpxB"/>
    <property type="match status" value="1"/>
</dbReference>
<dbReference type="PANTHER" id="PTHR30372">
    <property type="entry name" value="LIPID-A-DISACCHARIDE SYNTHASE"/>
    <property type="match status" value="1"/>
</dbReference>
<dbReference type="PANTHER" id="PTHR30372:SF4">
    <property type="entry name" value="LIPID-A-DISACCHARIDE SYNTHASE, MITOCHONDRIAL-RELATED"/>
    <property type="match status" value="1"/>
</dbReference>
<dbReference type="Pfam" id="PF02684">
    <property type="entry name" value="LpxB"/>
    <property type="match status" value="1"/>
</dbReference>
<dbReference type="SUPFAM" id="SSF53756">
    <property type="entry name" value="UDP-Glycosyltransferase/glycogen phosphorylase"/>
    <property type="match status" value="1"/>
</dbReference>
<keyword id="KW-0328">Glycosyltransferase</keyword>
<keyword id="KW-0441">Lipid A biosynthesis</keyword>
<keyword id="KW-0444">Lipid biosynthesis</keyword>
<keyword id="KW-0443">Lipid metabolism</keyword>
<keyword id="KW-0808">Transferase</keyword>
<gene>
    <name evidence="1" type="primary">lpxB</name>
    <name type="ordered locus">SeD_A0251</name>
</gene>
<proteinExistence type="inferred from homology"/>
<organism>
    <name type="scientific">Salmonella dublin (strain CT_02021853)</name>
    <dbReference type="NCBI Taxonomy" id="439851"/>
    <lineage>
        <taxon>Bacteria</taxon>
        <taxon>Pseudomonadati</taxon>
        <taxon>Pseudomonadota</taxon>
        <taxon>Gammaproteobacteria</taxon>
        <taxon>Enterobacterales</taxon>
        <taxon>Enterobacteriaceae</taxon>
        <taxon>Salmonella</taxon>
    </lineage>
</organism>
<evidence type="ECO:0000255" key="1">
    <source>
        <dbReference type="HAMAP-Rule" id="MF_00392"/>
    </source>
</evidence>
<reference key="1">
    <citation type="journal article" date="2011" name="J. Bacteriol.">
        <title>Comparative genomics of 28 Salmonella enterica isolates: evidence for CRISPR-mediated adaptive sublineage evolution.</title>
        <authorList>
            <person name="Fricke W.F."/>
            <person name="Mammel M.K."/>
            <person name="McDermott P.F."/>
            <person name="Tartera C."/>
            <person name="White D.G."/>
            <person name="Leclerc J.E."/>
            <person name="Ravel J."/>
            <person name="Cebula T.A."/>
        </authorList>
    </citation>
    <scope>NUCLEOTIDE SEQUENCE [LARGE SCALE GENOMIC DNA]</scope>
    <source>
        <strain>CT_02021853</strain>
    </source>
</reference>
<sequence length="382" mass="42452">MAAQRPLTIALVAGETSGDILGAGLIRALKARVPNARFVGVAGPRMQAEGCEAWYEMEELAVMGIVEVLGRLRRLLHIRADLTRRFTELKPDVFVGIDAPDFNITLEGNLKKQGIKTIHYVSPSVWAWRQKRVFKIGRSTHMVLAFLPFEKAFYDKFNVPCRFIGHTMADAMPLDPDKNAARDVLGIPHDAHCLALLPGSRGAEVEMLSADFLKTAQLLRQRYPDLEVVVPLVNAKRREQFEKIKAEVAPDLAVHLLDGMAREAMIASDAALLASGTAALECMLAKCPMVVGYRMKPFTFWLAKRLVKTEYVSLPNLLAGRELVKELLQEECEPQKLAEALLPLLANGKTSHAMHDTFRELHQQIRCNADEQAADAVLELAQ</sequence>
<protein>
    <recommendedName>
        <fullName evidence="1">Lipid-A-disaccharide synthase</fullName>
        <ecNumber evidence="1">2.4.1.182</ecNumber>
    </recommendedName>
</protein>
<accession>B5FJ29</accession>